<proteinExistence type="evidence at protein level"/>
<protein>
    <recommendedName>
        <fullName evidence="11">Flavin-dependent halogenase armH3</fullName>
        <ecNumber evidence="6">1.14.19.-</ecNumber>
    </recommendedName>
</protein>
<evidence type="ECO:0000250" key="1">
    <source>
        <dbReference type="UniProtKB" id="P95480"/>
    </source>
</evidence>
<evidence type="ECO:0000256" key="2">
    <source>
        <dbReference type="SAM" id="MobiDB-lite"/>
    </source>
</evidence>
<evidence type="ECO:0000269" key="3">
    <source>
    </source>
</evidence>
<evidence type="ECO:0000269" key="4">
    <source>
    </source>
</evidence>
<evidence type="ECO:0000269" key="5">
    <source>
    </source>
</evidence>
<evidence type="ECO:0000269" key="6">
    <source>
    </source>
</evidence>
<evidence type="ECO:0000269" key="7">
    <source>
    </source>
</evidence>
<evidence type="ECO:0000269" key="8">
    <source>
    </source>
</evidence>
<evidence type="ECO:0000269" key="9">
    <source>
    </source>
</evidence>
<evidence type="ECO:0000269" key="10">
    <source>
    </source>
</evidence>
<evidence type="ECO:0000303" key="11">
    <source>
    </source>
</evidence>
<evidence type="ECO:0000305" key="12"/>
<evidence type="ECO:0000305" key="13">
    <source>
    </source>
</evidence>
<accession>A0A0U2JT80</accession>
<feature type="chain" id="PRO_0000442632" description="Flavin-dependent halogenase armH3">
    <location>
        <begin position="1"/>
        <end position="504"/>
    </location>
</feature>
<feature type="region of interest" description="Disordered" evidence="2">
    <location>
        <begin position="444"/>
        <end position="475"/>
    </location>
</feature>
<feature type="binding site" evidence="1">
    <location>
        <position position="16"/>
    </location>
    <ligand>
        <name>FAD</name>
        <dbReference type="ChEBI" id="CHEBI:57692"/>
    </ligand>
</feature>
<feature type="binding site" evidence="1">
    <location>
        <position position="19"/>
    </location>
    <ligand>
        <name>FAD</name>
        <dbReference type="ChEBI" id="CHEBI:57692"/>
    </ligand>
</feature>
<feature type="binding site" evidence="1">
    <location>
        <position position="49"/>
    </location>
    <ligand>
        <name>FAD</name>
        <dbReference type="ChEBI" id="CHEBI:57692"/>
    </ligand>
</feature>
<feature type="binding site" evidence="1">
    <location>
        <position position="149"/>
    </location>
    <ligand>
        <name>FAD</name>
        <dbReference type="ChEBI" id="CHEBI:57692"/>
    </ligand>
</feature>
<feature type="binding site" evidence="1">
    <location>
        <position position="329"/>
    </location>
    <ligand>
        <name>chloride</name>
        <dbReference type="ChEBI" id="CHEBI:17996"/>
    </ligand>
</feature>
<feature type="binding site" evidence="1">
    <location>
        <position position="330"/>
    </location>
    <ligand>
        <name>chloride</name>
        <dbReference type="ChEBI" id="CHEBI:17996"/>
    </ligand>
</feature>
<feature type="binding site" evidence="1">
    <location>
        <position position="331"/>
    </location>
    <ligand>
        <name>FAD</name>
        <dbReference type="ChEBI" id="CHEBI:57692"/>
    </ligand>
</feature>
<gene>
    <name evidence="11" type="primary">armH3</name>
</gene>
<dbReference type="EC" id="1.14.19.-" evidence="6"/>
<dbReference type="EMBL" id="KT819179">
    <property type="protein sequence ID" value="ALT31850.1"/>
    <property type="molecule type" value="mRNA"/>
</dbReference>
<dbReference type="SMR" id="A0A0U2JT80"/>
<dbReference type="GO" id="GO:0140907">
    <property type="term" value="F:flavin-dependent halogenase activity"/>
    <property type="evidence" value="ECO:0000314"/>
    <property type="project" value="GO_Central"/>
</dbReference>
<dbReference type="GO" id="GO:0004497">
    <property type="term" value="F:monooxygenase activity"/>
    <property type="evidence" value="ECO:0007669"/>
    <property type="project" value="UniProtKB-KW"/>
</dbReference>
<dbReference type="GO" id="GO:0044550">
    <property type="term" value="P:secondary metabolite biosynthetic process"/>
    <property type="evidence" value="ECO:0000314"/>
    <property type="project" value="GO_Central"/>
</dbReference>
<dbReference type="Gene3D" id="3.50.50.60">
    <property type="entry name" value="FAD/NAD(P)-binding domain"/>
    <property type="match status" value="1"/>
</dbReference>
<dbReference type="InterPro" id="IPR036188">
    <property type="entry name" value="FAD/NAD-bd_sf"/>
</dbReference>
<dbReference type="InterPro" id="IPR050816">
    <property type="entry name" value="Flavin-dep_Halogenase_NPB"/>
</dbReference>
<dbReference type="InterPro" id="IPR006905">
    <property type="entry name" value="Flavin_halogenase"/>
</dbReference>
<dbReference type="PANTHER" id="PTHR43747:SF5">
    <property type="entry name" value="FAD-BINDING DOMAIN-CONTAINING PROTEIN"/>
    <property type="match status" value="1"/>
</dbReference>
<dbReference type="PANTHER" id="PTHR43747">
    <property type="entry name" value="FAD-BINDING PROTEIN"/>
    <property type="match status" value="1"/>
</dbReference>
<dbReference type="Pfam" id="PF04820">
    <property type="entry name" value="Trp_halogenase"/>
    <property type="match status" value="2"/>
</dbReference>
<dbReference type="PRINTS" id="PR00420">
    <property type="entry name" value="RNGMNOXGNASE"/>
</dbReference>
<dbReference type="SUPFAM" id="SSF51905">
    <property type="entry name" value="FAD/NAD(P)-binding domain"/>
    <property type="match status" value="1"/>
</dbReference>
<sequence length="504" mass="55322">MEAQVPLSTDILVIGGGPAGSYAAAVLAREGFKVVLLEKDVFPRYHIGESMLPSCRPFLRFIDFEEKMKNYGFFPKPGAALKLNQDKREGYTDFTANGPDNAAWNVVRSEFDDLLLRHAAELGVHVYEGVQVEKIHFSPDESTRPVSLAWSKGDGTQGDVSFNWLVDASGRNGIMSTRYLKNRTFNKSLKNVAVWGYWTGAGRYAPGTKRENAPWFEALTDETGWAWFIPLHNGATSVGVVLAEDESKRKKAQHRAESNGKSLSEVQHDCYMADLQRAPGLIQLLGSEAKFEGKLMSAGDYSYHASEYAGSHFRIAGDAGAFIDPFFSSGIHLALTGGLSAASTIAASIRGNCTEEEACAFHSSKVETAYTRFLFVVLGIYKQIRAQETAVLYEAEEDNFDRAIDSLRPVIQGCADADENLTEAELQSTLDFCRSVLAPNQQQNNLRTPVDTGAADVKAKHAPSETDAQNPLQSMDDCKRNFGTEVINGFYVKMEQGMLGLVCA</sequence>
<comment type="function">
    <text evidence="6">Flavin-dependent halogenase involved in the biosynthesis of melleolides, a range of antifungal and phytotoxic polyketide derivatives composed of an orsellinic acid (OA) moiety esterified to various sesquiterpene alcohols. The halogenase catalyzes the transfer of a single chlorine atom to the melleolide backbone, resulting in a 6'-chloromelleolide product. The enzyme acts on free substrate and does not depend on carrier-protein-dependent acceptor molecules.</text>
</comment>
<comment type="catalytic activity">
    <reaction evidence="6">
        <text>melleolide F + FADH2 + chloride + O2 = 6'-chloromelleolide F + FAD + 2 H2O + H(+)</text>
        <dbReference type="Rhea" id="RHEA:67160"/>
        <dbReference type="ChEBI" id="CHEBI:15377"/>
        <dbReference type="ChEBI" id="CHEBI:15378"/>
        <dbReference type="ChEBI" id="CHEBI:15379"/>
        <dbReference type="ChEBI" id="CHEBI:17996"/>
        <dbReference type="ChEBI" id="CHEBI:57692"/>
        <dbReference type="ChEBI" id="CHEBI:58307"/>
        <dbReference type="ChEBI" id="CHEBI:167712"/>
        <dbReference type="ChEBI" id="CHEBI:167713"/>
    </reaction>
    <physiologicalReaction direction="left-to-right" evidence="6">
        <dbReference type="Rhea" id="RHEA:67161"/>
    </physiologicalReaction>
</comment>
<comment type="biotechnology">
    <text evidence="3 4 5 7 8 9">Melleolide sesquiterpene aryl esters are cytotoxic secondary products with anti-cancer potential (PubMed:21376582, PubMed:26952552). Armillaridin shows therapeutic and radiosensitizing effects on human esophageal cancer cells (PubMed:23864890). Armillaridin induces autophagy-associated cell death in human chronic myelogenous leukemia as well as of hepatocellular carcinoma cells (PubMed:27592257, PubMed:31488037). Armillaridin can also inhibit the differentiation and activation of human macrophages and thus might have potential to be developed as a biological response modifier for inflammatory diseases (PubMed:25746621).</text>
</comment>
<comment type="miscellaneous">
    <text evidence="10 13">Armillaria species are both devastating forest pathogens and some of the largest and oldest terrestrial organisms on Earth (Probable) (PubMed:31746694). They forage for hosts and achieve immense colony sizes via rhizomorphs, root-like multicellular structures of clonal dispersal (Probable).</text>
</comment>
<comment type="similarity">
    <text evidence="12">Belongs to the flavin-dependent halogenase family.</text>
</comment>
<organism>
    <name type="scientific">Armillaria mellea</name>
    <name type="common">Honey mushroom</name>
    <name type="synonym">Agaricus melleus</name>
    <dbReference type="NCBI Taxonomy" id="47429"/>
    <lineage>
        <taxon>Eukaryota</taxon>
        <taxon>Fungi</taxon>
        <taxon>Dikarya</taxon>
        <taxon>Basidiomycota</taxon>
        <taxon>Agaricomycotina</taxon>
        <taxon>Agaricomycetes</taxon>
        <taxon>Agaricomycetidae</taxon>
        <taxon>Agaricales</taxon>
        <taxon>Marasmiineae</taxon>
        <taxon>Physalacriaceae</taxon>
        <taxon>Armillaria</taxon>
    </lineage>
</organism>
<keyword id="KW-0274">FAD</keyword>
<keyword id="KW-0285">Flavoprotein</keyword>
<keyword id="KW-0503">Monooxygenase</keyword>
<keyword id="KW-0560">Oxidoreductase</keyword>
<reference key="1">
    <citation type="journal article" date="2015" name="Appl. Environ. Microbiol.">
        <title>A fivefold parallelized biosynthetic process secures chlorination of Armillaria mellea (honey mushroom) toxins.</title>
        <authorList>
            <person name="Wick J."/>
            <person name="Heine D."/>
            <person name="Lackner G."/>
            <person name="Misiek M."/>
            <person name="Tauber J."/>
            <person name="Jagusch H."/>
            <person name="Hertweck C."/>
            <person name="Hoffmeister D."/>
        </authorList>
    </citation>
    <scope>NUCLEOTIDE SEQUENCE [MRNA]</scope>
    <scope>FUNCTION</scope>
    <scope>CATALYTIC ACTIVITY</scope>
    <source>
        <strain>DSM 3731</strain>
    </source>
</reference>
<reference key="2">
    <citation type="journal article" date="2011" name="Bioorg. Med. Chem. Lett.">
        <title>In vitro cytotoxicity of melleolide antibiotics: structural and mechanistic aspects.</title>
        <authorList>
            <person name="Bohnert M."/>
            <person name="Miethbauer S."/>
            <person name="Dahse H.M."/>
            <person name="Ziemen J."/>
            <person name="Nett M."/>
            <person name="Hoffmeister D."/>
        </authorList>
    </citation>
    <scope>BIOTECHNOLOGY</scope>
</reference>
<reference key="3">
    <citation type="journal article" date="2013" name="Evid. Based Complement Alternat. Med.">
        <title>Therapeutic and radiosensitizing effects of armillaridin on human esophageal cancer cells.</title>
        <authorList>
            <person name="Chi C.W."/>
            <person name="Chen C.C."/>
            <person name="Chen Y.J."/>
        </authorList>
    </citation>
    <scope>BIOTECHNOLOGY</scope>
</reference>
<reference key="4">
    <citation type="journal article" date="2015" name="Int. J. Med. Mushrooms">
        <title>Armillaridin, a honey medicinal mushroom, Armillaria mellea (higher basidiomycetes) component, inhibits differentiation and activation of human macrophages.</title>
        <authorList>
            <person name="Liu T.P."/>
            <person name="Chen C.C."/>
            <person name="Shiao P.Y."/>
            <person name="Shieh H.R."/>
            <person name="Chen Y.Y."/>
            <person name="Chen Y.J."/>
        </authorList>
    </citation>
    <scope>BIOTECHNOLOGY</scope>
</reference>
<reference key="5">
    <citation type="journal article" date="2016" name="J. Ethnopharmacol.">
        <title>Structure, cytotoxic activity and mechanism of protoilludane sesquiterpene aryl esters from the mycelium of Armillaria mellea.</title>
        <authorList>
            <person name="Li Z."/>
            <person name="Wang Y."/>
            <person name="Jiang B."/>
            <person name="Li W."/>
            <person name="Zheng L."/>
            <person name="Yang X."/>
            <person name="Bao Y."/>
            <person name="Sun L."/>
            <person name="Huang Y."/>
            <person name="Li Y."/>
        </authorList>
    </citation>
    <scope>BIOTECHNOLOGY</scope>
</reference>
<reference key="6">
    <citation type="journal article" date="2016" name="Tumor Biol.">
        <title>Armillaridin induces autophagy-associated cell death in human chronic myelogenous leukemia K562 cells.</title>
        <authorList>
            <person name="Chang W.H."/>
            <person name="Huang H.L."/>
            <person name="Huang W.P."/>
            <person name="Chen C.C."/>
            <person name="Chen Y.J."/>
        </authorList>
    </citation>
    <scope>BIOTECHNOLOGY</scope>
</reference>
<reference key="7">
    <citation type="journal article" date="2018" name="Curr. Biol.">
        <title>Armillaria.</title>
        <authorList>
            <person name="Sipos G."/>
            <person name="Anderson J.B."/>
            <person name="Nagy L.G."/>
        </authorList>
    </citation>
    <scope>MISCELLANEOUS</scope>
</reference>
<reference key="8">
    <citation type="journal article" date="2019" name="Am. J. Chin. Med.">
        <title>Induction of autophagic death of human hepatocellular carcinoma cells by armillaridin from Armillaria mellea.</title>
        <authorList>
            <person name="Leu Y.S."/>
            <person name="Chen Y.J."/>
            <person name="Chen C.C."/>
            <person name="Huang H.L."/>
        </authorList>
    </citation>
    <scope>BIOTECHNOLOGY</scope>
</reference>
<reference key="9">
    <citation type="journal article" date="2020" name="Plant Dis.">
        <title>Susceptibility of garden trees and shrubs to Armillaria root rot.</title>
        <authorList>
            <person name="Cromey M.G."/>
            <person name="Drakulic J."/>
            <person name="Beal E.J."/>
            <person name="Waghorn I.A.G."/>
            <person name="Perry J.N."/>
            <person name="Clover G.R.G."/>
        </authorList>
    </citation>
    <scope>MISCELLANEOUS</scope>
</reference>
<name>ARMH3_ARMME</name>